<protein>
    <recommendedName>
        <fullName evidence="10">AMP deaminase 2</fullName>
        <ecNumber evidence="6">3.5.4.6</ecNumber>
    </recommendedName>
    <alternativeName>
        <fullName>AMP deaminase isoform L</fullName>
    </alternativeName>
</protein>
<proteinExistence type="evidence at protein level"/>
<reference key="1">
    <citation type="journal article" date="1992" name="J. Biol. Chem.">
        <title>Molecular cloning of AMP deaminase isoform L. Sequence and bacterial expression of human AMPD2 cDNA.</title>
        <authorList>
            <person name="Bausch-Jurken M.T."/>
            <person name="Mahnke-Zizelman D.K."/>
            <person name="Morisaki T."/>
            <person name="Sabina R.L."/>
        </authorList>
    </citation>
    <scope>NUCLEOTIDE SEQUENCE [GENOMIC RNA] OF 73-825 (ISOFORM EX1B-2-3)</scope>
    <scope>NUCLEOTIDE SEQUENCE [MRNA] OF 73-825 (ISOFORM EX1B-2-3)</scope>
    <source>
        <tissue>Placenta</tissue>
    </source>
</reference>
<reference key="2">
    <citation type="journal article" date="1995" name="Biochem. J.">
        <title>Characterization of human AMP deaminase 2 (AMPD2) gene expression reveals alternative transcripts encoding variable N-terminal extensions of isoform L.</title>
        <authorList>
            <person name="Van den Bergh F."/>
            <person name="Sabina R.L."/>
        </authorList>
    </citation>
    <scope>NUCLEOTIDE SEQUENCE [MRNA] OF 1-202 (ISOFORM EX1A-2-3)</scope>
    <scope>NUCLEOTIDE SEQUENCE [MRNA] OF 1-202 (ISOFORM EX1B-2-3)</scope>
    <scope>NUCLEOTIDE SEQUENCE [GENOMIC RNA] OF 1-670 (ISOFORM EX1B-3)</scope>
</reference>
<reference key="3">
    <citation type="journal article" date="1996" name="Biochim. Biophys. Acta">
        <title>Cloning, sequence and characterization of the human AMPD2 gene: evidence for transcriptional regulation by two closely spaced promoters.</title>
        <authorList>
            <person name="Mahnke-Zizelman D.K."/>
            <person name="van den Bergh F."/>
            <person name="Bausch-Jurken M.T."/>
            <person name="Eddy R."/>
            <person name="Sait S."/>
            <person name="Shows T.B."/>
            <person name="Sabina R.L."/>
        </authorList>
    </citation>
    <scope>NUCLEOTIDE SEQUENCE [GENOMIC DNA] (ISOFORMS EX1B-3; EX1A-2-3 AND EX1B-2-3)</scope>
</reference>
<reference key="4">
    <citation type="journal article" date="2004" name="Nat. Genet.">
        <title>Complete sequencing and characterization of 21,243 full-length human cDNAs.</title>
        <authorList>
            <person name="Ota T."/>
            <person name="Suzuki Y."/>
            <person name="Nishikawa T."/>
            <person name="Otsuki T."/>
            <person name="Sugiyama T."/>
            <person name="Irie R."/>
            <person name="Wakamatsu A."/>
            <person name="Hayashi K."/>
            <person name="Sato H."/>
            <person name="Nagai K."/>
            <person name="Kimura K."/>
            <person name="Makita H."/>
            <person name="Sekine M."/>
            <person name="Obayashi M."/>
            <person name="Nishi T."/>
            <person name="Shibahara T."/>
            <person name="Tanaka T."/>
            <person name="Ishii S."/>
            <person name="Yamamoto J."/>
            <person name="Saito K."/>
            <person name="Kawai Y."/>
            <person name="Isono Y."/>
            <person name="Nakamura Y."/>
            <person name="Nagahari K."/>
            <person name="Murakami K."/>
            <person name="Yasuda T."/>
            <person name="Iwayanagi T."/>
            <person name="Wagatsuma M."/>
            <person name="Shiratori A."/>
            <person name="Sudo H."/>
            <person name="Hosoiri T."/>
            <person name="Kaku Y."/>
            <person name="Kodaira H."/>
            <person name="Kondo H."/>
            <person name="Sugawara M."/>
            <person name="Takahashi M."/>
            <person name="Kanda K."/>
            <person name="Yokoi T."/>
            <person name="Furuya T."/>
            <person name="Kikkawa E."/>
            <person name="Omura Y."/>
            <person name="Abe K."/>
            <person name="Kamihara K."/>
            <person name="Katsuta N."/>
            <person name="Sato K."/>
            <person name="Tanikawa M."/>
            <person name="Yamazaki M."/>
            <person name="Ninomiya K."/>
            <person name="Ishibashi T."/>
            <person name="Yamashita H."/>
            <person name="Murakawa K."/>
            <person name="Fujimori K."/>
            <person name="Tanai H."/>
            <person name="Kimata M."/>
            <person name="Watanabe M."/>
            <person name="Hiraoka S."/>
            <person name="Chiba Y."/>
            <person name="Ishida S."/>
            <person name="Ono Y."/>
            <person name="Takiguchi S."/>
            <person name="Watanabe S."/>
            <person name="Yosida M."/>
            <person name="Hotuta T."/>
            <person name="Kusano J."/>
            <person name="Kanehori K."/>
            <person name="Takahashi-Fujii A."/>
            <person name="Hara H."/>
            <person name="Tanase T.-O."/>
            <person name="Nomura Y."/>
            <person name="Togiya S."/>
            <person name="Komai F."/>
            <person name="Hara R."/>
            <person name="Takeuchi K."/>
            <person name="Arita M."/>
            <person name="Imose N."/>
            <person name="Musashino K."/>
            <person name="Yuuki H."/>
            <person name="Oshima A."/>
            <person name="Sasaki N."/>
            <person name="Aotsuka S."/>
            <person name="Yoshikawa Y."/>
            <person name="Matsunawa H."/>
            <person name="Ichihara T."/>
            <person name="Shiohata N."/>
            <person name="Sano S."/>
            <person name="Moriya S."/>
            <person name="Momiyama H."/>
            <person name="Satoh N."/>
            <person name="Takami S."/>
            <person name="Terashima Y."/>
            <person name="Suzuki O."/>
            <person name="Nakagawa S."/>
            <person name="Senoh A."/>
            <person name="Mizoguchi H."/>
            <person name="Goto Y."/>
            <person name="Shimizu F."/>
            <person name="Wakebe H."/>
            <person name="Hishigaki H."/>
            <person name="Watanabe T."/>
            <person name="Sugiyama A."/>
            <person name="Takemoto M."/>
            <person name="Kawakami B."/>
            <person name="Yamazaki M."/>
            <person name="Watanabe K."/>
            <person name="Kumagai A."/>
            <person name="Itakura S."/>
            <person name="Fukuzumi Y."/>
            <person name="Fujimori Y."/>
            <person name="Komiyama M."/>
            <person name="Tashiro H."/>
            <person name="Tanigami A."/>
            <person name="Fujiwara T."/>
            <person name="Ono T."/>
            <person name="Yamada K."/>
            <person name="Fujii Y."/>
            <person name="Ozaki K."/>
            <person name="Hirao M."/>
            <person name="Ohmori Y."/>
            <person name="Kawabata A."/>
            <person name="Hikiji T."/>
            <person name="Kobatake N."/>
            <person name="Inagaki H."/>
            <person name="Ikema Y."/>
            <person name="Okamoto S."/>
            <person name="Okitani R."/>
            <person name="Kawakami T."/>
            <person name="Noguchi S."/>
            <person name="Itoh T."/>
            <person name="Shigeta K."/>
            <person name="Senba T."/>
            <person name="Matsumura K."/>
            <person name="Nakajima Y."/>
            <person name="Mizuno T."/>
            <person name="Morinaga M."/>
            <person name="Sasaki M."/>
            <person name="Togashi T."/>
            <person name="Oyama M."/>
            <person name="Hata H."/>
            <person name="Watanabe M."/>
            <person name="Komatsu T."/>
            <person name="Mizushima-Sugano J."/>
            <person name="Satoh T."/>
            <person name="Shirai Y."/>
            <person name="Takahashi Y."/>
            <person name="Nakagawa K."/>
            <person name="Okumura K."/>
            <person name="Nagase T."/>
            <person name="Nomura N."/>
            <person name="Kikuchi H."/>
            <person name="Masuho Y."/>
            <person name="Yamashita R."/>
            <person name="Nakai K."/>
            <person name="Yada T."/>
            <person name="Nakamura Y."/>
            <person name="Ohara O."/>
            <person name="Isogai T."/>
            <person name="Sugano S."/>
        </authorList>
    </citation>
    <scope>NUCLEOTIDE SEQUENCE [LARGE SCALE MRNA] (ISOFORMS EX1B-3 AND 5)</scope>
    <scope>VARIANT VAL-468</scope>
    <source>
        <tissue>Testis</tissue>
        <tissue>Thalamus</tissue>
    </source>
</reference>
<reference key="5">
    <citation type="journal article" date="2006" name="Nature">
        <title>The DNA sequence and biological annotation of human chromosome 1.</title>
        <authorList>
            <person name="Gregory S.G."/>
            <person name="Barlow K.F."/>
            <person name="McLay K.E."/>
            <person name="Kaul R."/>
            <person name="Swarbreck D."/>
            <person name="Dunham A."/>
            <person name="Scott C.E."/>
            <person name="Howe K.L."/>
            <person name="Woodfine K."/>
            <person name="Spencer C.C.A."/>
            <person name="Jones M.C."/>
            <person name="Gillson C."/>
            <person name="Searle S."/>
            <person name="Zhou Y."/>
            <person name="Kokocinski F."/>
            <person name="McDonald L."/>
            <person name="Evans R."/>
            <person name="Phillips K."/>
            <person name="Atkinson A."/>
            <person name="Cooper R."/>
            <person name="Jones C."/>
            <person name="Hall R.E."/>
            <person name="Andrews T.D."/>
            <person name="Lloyd C."/>
            <person name="Ainscough R."/>
            <person name="Almeida J.P."/>
            <person name="Ambrose K.D."/>
            <person name="Anderson F."/>
            <person name="Andrew R.W."/>
            <person name="Ashwell R.I.S."/>
            <person name="Aubin K."/>
            <person name="Babbage A.K."/>
            <person name="Bagguley C.L."/>
            <person name="Bailey J."/>
            <person name="Beasley H."/>
            <person name="Bethel G."/>
            <person name="Bird C.P."/>
            <person name="Bray-Allen S."/>
            <person name="Brown J.Y."/>
            <person name="Brown A.J."/>
            <person name="Buckley D."/>
            <person name="Burton J."/>
            <person name="Bye J."/>
            <person name="Carder C."/>
            <person name="Chapman J.C."/>
            <person name="Clark S.Y."/>
            <person name="Clarke G."/>
            <person name="Clee C."/>
            <person name="Cobley V."/>
            <person name="Collier R.E."/>
            <person name="Corby N."/>
            <person name="Coville G.J."/>
            <person name="Davies J."/>
            <person name="Deadman R."/>
            <person name="Dunn M."/>
            <person name="Earthrowl M."/>
            <person name="Ellington A.G."/>
            <person name="Errington H."/>
            <person name="Frankish A."/>
            <person name="Frankland J."/>
            <person name="French L."/>
            <person name="Garner P."/>
            <person name="Garnett J."/>
            <person name="Gay L."/>
            <person name="Ghori M.R.J."/>
            <person name="Gibson R."/>
            <person name="Gilby L.M."/>
            <person name="Gillett W."/>
            <person name="Glithero R.J."/>
            <person name="Grafham D.V."/>
            <person name="Griffiths C."/>
            <person name="Griffiths-Jones S."/>
            <person name="Grocock R."/>
            <person name="Hammond S."/>
            <person name="Harrison E.S.I."/>
            <person name="Hart E."/>
            <person name="Haugen E."/>
            <person name="Heath P.D."/>
            <person name="Holmes S."/>
            <person name="Holt K."/>
            <person name="Howden P.J."/>
            <person name="Hunt A.R."/>
            <person name="Hunt S.E."/>
            <person name="Hunter G."/>
            <person name="Isherwood J."/>
            <person name="James R."/>
            <person name="Johnson C."/>
            <person name="Johnson D."/>
            <person name="Joy A."/>
            <person name="Kay M."/>
            <person name="Kershaw J.K."/>
            <person name="Kibukawa M."/>
            <person name="Kimberley A.M."/>
            <person name="King A."/>
            <person name="Knights A.J."/>
            <person name="Lad H."/>
            <person name="Laird G."/>
            <person name="Lawlor S."/>
            <person name="Leongamornlert D.A."/>
            <person name="Lloyd D.M."/>
            <person name="Loveland J."/>
            <person name="Lovell J."/>
            <person name="Lush M.J."/>
            <person name="Lyne R."/>
            <person name="Martin S."/>
            <person name="Mashreghi-Mohammadi M."/>
            <person name="Matthews L."/>
            <person name="Matthews N.S.W."/>
            <person name="McLaren S."/>
            <person name="Milne S."/>
            <person name="Mistry S."/>
            <person name="Moore M.J.F."/>
            <person name="Nickerson T."/>
            <person name="O'Dell C.N."/>
            <person name="Oliver K."/>
            <person name="Palmeiri A."/>
            <person name="Palmer S.A."/>
            <person name="Parker A."/>
            <person name="Patel D."/>
            <person name="Pearce A.V."/>
            <person name="Peck A.I."/>
            <person name="Pelan S."/>
            <person name="Phelps K."/>
            <person name="Phillimore B.J."/>
            <person name="Plumb R."/>
            <person name="Rajan J."/>
            <person name="Raymond C."/>
            <person name="Rouse G."/>
            <person name="Saenphimmachak C."/>
            <person name="Sehra H.K."/>
            <person name="Sheridan E."/>
            <person name="Shownkeen R."/>
            <person name="Sims S."/>
            <person name="Skuce C.D."/>
            <person name="Smith M."/>
            <person name="Steward C."/>
            <person name="Subramanian S."/>
            <person name="Sycamore N."/>
            <person name="Tracey A."/>
            <person name="Tromans A."/>
            <person name="Van Helmond Z."/>
            <person name="Wall M."/>
            <person name="Wallis J.M."/>
            <person name="White S."/>
            <person name="Whitehead S.L."/>
            <person name="Wilkinson J.E."/>
            <person name="Willey D.L."/>
            <person name="Williams H."/>
            <person name="Wilming L."/>
            <person name="Wray P.W."/>
            <person name="Wu Z."/>
            <person name="Coulson A."/>
            <person name="Vaudin M."/>
            <person name="Sulston J.E."/>
            <person name="Durbin R.M."/>
            <person name="Hubbard T."/>
            <person name="Wooster R."/>
            <person name="Dunham I."/>
            <person name="Carter N.P."/>
            <person name="McVean G."/>
            <person name="Ross M.T."/>
            <person name="Harrow J."/>
            <person name="Olson M.V."/>
            <person name="Beck S."/>
            <person name="Rogers J."/>
            <person name="Bentley D.R."/>
        </authorList>
    </citation>
    <scope>NUCLEOTIDE SEQUENCE [LARGE SCALE GENOMIC DNA]</scope>
</reference>
<reference key="6">
    <citation type="submission" date="2005-07" db="EMBL/GenBank/DDBJ databases">
        <authorList>
            <person name="Mural R.J."/>
            <person name="Istrail S."/>
            <person name="Sutton G.G."/>
            <person name="Florea L."/>
            <person name="Halpern A.L."/>
            <person name="Mobarry C.M."/>
            <person name="Lippert R."/>
            <person name="Walenz B."/>
            <person name="Shatkay H."/>
            <person name="Dew I."/>
            <person name="Miller J.R."/>
            <person name="Flanigan M.J."/>
            <person name="Edwards N.J."/>
            <person name="Bolanos R."/>
            <person name="Fasulo D."/>
            <person name="Halldorsson B.V."/>
            <person name="Hannenhalli S."/>
            <person name="Turner R."/>
            <person name="Yooseph S."/>
            <person name="Lu F."/>
            <person name="Nusskern D.R."/>
            <person name="Shue B.C."/>
            <person name="Zheng X.H."/>
            <person name="Zhong F."/>
            <person name="Delcher A.L."/>
            <person name="Huson D.H."/>
            <person name="Kravitz S.A."/>
            <person name="Mouchard L."/>
            <person name="Reinert K."/>
            <person name="Remington K.A."/>
            <person name="Clark A.G."/>
            <person name="Waterman M.S."/>
            <person name="Eichler E.E."/>
            <person name="Adams M.D."/>
            <person name="Hunkapiller M.W."/>
            <person name="Myers E.W."/>
            <person name="Venter J.C."/>
        </authorList>
    </citation>
    <scope>NUCLEOTIDE SEQUENCE [LARGE SCALE GENOMIC DNA]</scope>
</reference>
<reference key="7">
    <citation type="journal article" date="2004" name="Genome Res.">
        <title>The status, quality, and expansion of the NIH full-length cDNA project: the Mammalian Gene Collection (MGC).</title>
        <authorList>
            <consortium name="The MGC Project Team"/>
        </authorList>
    </citation>
    <scope>NUCLEOTIDE SEQUENCE [LARGE SCALE MRNA] (ISOFORM EX1A-2-3)</scope>
    <source>
        <tissue>Brain</tissue>
    </source>
</reference>
<reference key="8">
    <citation type="journal article" date="2006" name="Cell">
        <title>Global, in vivo, and site-specific phosphorylation dynamics in signaling networks.</title>
        <authorList>
            <person name="Olsen J.V."/>
            <person name="Blagoev B."/>
            <person name="Gnad F."/>
            <person name="Macek B."/>
            <person name="Kumar C."/>
            <person name="Mortensen P."/>
            <person name="Mann M."/>
        </authorList>
    </citation>
    <scope>PHOSPHORYLATION [LARGE SCALE ANALYSIS] AT SER-114</scope>
    <scope>IDENTIFICATION BY MASS SPECTROMETRY [LARGE SCALE ANALYSIS]</scope>
    <source>
        <tissue>Cervix carcinoma</tissue>
    </source>
</reference>
<reference key="9">
    <citation type="journal article" date="2008" name="J. Proteome Res.">
        <title>Phosphoproteome of resting human platelets.</title>
        <authorList>
            <person name="Zahedi R.P."/>
            <person name="Lewandrowski U."/>
            <person name="Wiesner J."/>
            <person name="Wortelkamp S."/>
            <person name="Moebius J."/>
            <person name="Schuetz C."/>
            <person name="Walter U."/>
            <person name="Gambaryan S."/>
            <person name="Sickmann A."/>
        </authorList>
    </citation>
    <scope>IDENTIFICATION BY MASS SPECTROMETRY [LARGE SCALE ANALYSIS]</scope>
    <source>
        <tissue>Platelet</tissue>
    </source>
</reference>
<reference key="10">
    <citation type="journal article" date="2008" name="Proc. Natl. Acad. Sci. U.S.A.">
        <title>A quantitative atlas of mitotic phosphorylation.</title>
        <authorList>
            <person name="Dephoure N."/>
            <person name="Zhou C."/>
            <person name="Villen J."/>
            <person name="Beausoleil S.A."/>
            <person name="Bakalarski C.E."/>
            <person name="Elledge S.J."/>
            <person name="Gygi S.P."/>
        </authorList>
    </citation>
    <scope>PHOSPHORYLATION [LARGE SCALE ANALYSIS] AT SER-64; SER-97; THR-134 AND SER-136</scope>
    <scope>IDENTIFICATION BY MASS SPECTROMETRY [LARGE SCALE ANALYSIS]</scope>
    <source>
        <tissue>Cervix carcinoma</tissue>
    </source>
</reference>
<reference key="11">
    <citation type="journal article" date="2009" name="Sci. Signal.">
        <title>Quantitative phosphoproteomic analysis of T cell receptor signaling reveals system-wide modulation of protein-protein interactions.</title>
        <authorList>
            <person name="Mayya V."/>
            <person name="Lundgren D.H."/>
            <person name="Hwang S.-I."/>
            <person name="Rezaul K."/>
            <person name="Wu L."/>
            <person name="Eng J.K."/>
            <person name="Rodionov V."/>
            <person name="Han D.K."/>
        </authorList>
    </citation>
    <scope>PHOSPHORYLATION [LARGE SCALE ANALYSIS] AT SER-22 AND SER-136</scope>
    <scope>IDENTIFICATION BY MASS SPECTROMETRY [LARGE SCALE ANALYSIS]</scope>
    <source>
        <tissue>Leukemic T-cell</tissue>
    </source>
</reference>
<reference key="12">
    <citation type="journal article" date="2010" name="Sci. Signal.">
        <title>Quantitative phosphoproteomics reveals widespread full phosphorylation site occupancy during mitosis.</title>
        <authorList>
            <person name="Olsen J.V."/>
            <person name="Vermeulen M."/>
            <person name="Santamaria A."/>
            <person name="Kumar C."/>
            <person name="Miller M.L."/>
            <person name="Jensen L.J."/>
            <person name="Gnad F."/>
            <person name="Cox J."/>
            <person name="Jensen T.S."/>
            <person name="Nigg E.A."/>
            <person name="Brunak S."/>
            <person name="Mann M."/>
        </authorList>
    </citation>
    <scope>PHOSPHORYLATION [LARGE SCALE ANALYSIS] AT SER-114 AND SER-136</scope>
    <scope>IDENTIFICATION BY MASS SPECTROMETRY [LARGE SCALE ANALYSIS]</scope>
    <source>
        <tissue>Cervix carcinoma</tissue>
    </source>
</reference>
<reference key="13">
    <citation type="journal article" date="2011" name="BMC Syst. Biol.">
        <title>Initial characterization of the human central proteome.</title>
        <authorList>
            <person name="Burkard T.R."/>
            <person name="Planyavsky M."/>
            <person name="Kaupe I."/>
            <person name="Breitwieser F.P."/>
            <person name="Buerckstuemmer T."/>
            <person name="Bennett K.L."/>
            <person name="Superti-Furga G."/>
            <person name="Colinge J."/>
        </authorList>
    </citation>
    <scope>IDENTIFICATION BY MASS SPECTROMETRY [LARGE SCALE ANALYSIS]</scope>
</reference>
<reference key="14">
    <citation type="journal article" date="2011" name="Sci. Signal.">
        <title>System-wide temporal characterization of the proteome and phosphoproteome of human embryonic stem cell differentiation.</title>
        <authorList>
            <person name="Rigbolt K.T."/>
            <person name="Prokhorova T.A."/>
            <person name="Akimov V."/>
            <person name="Henningsen J."/>
            <person name="Johansen P.T."/>
            <person name="Kratchmarova I."/>
            <person name="Kassem M."/>
            <person name="Mann M."/>
            <person name="Olsen J.V."/>
            <person name="Blagoev B."/>
        </authorList>
    </citation>
    <scope>PHOSPHORYLATION [LARGE SCALE ANALYSIS] AT SER-136</scope>
    <scope>IDENTIFICATION BY MASS SPECTROMETRY [LARGE SCALE ANALYSIS]</scope>
</reference>
<reference key="15">
    <citation type="journal article" date="2013" name="Cell">
        <title>AMPD2 regulates GTP synthesis and is mutated in a potentially treatable neurodegenerative brainstem disorder.</title>
        <authorList>
            <person name="Akizu N."/>
            <person name="Cantagrel V."/>
            <person name="Schroth J."/>
            <person name="Cai N."/>
            <person name="Vaux K."/>
            <person name="McCloskey D."/>
            <person name="Naviaux R.K."/>
            <person name="Van Vleet J."/>
            <person name="Fenstermaker A.G."/>
            <person name="Silhavy J.L."/>
            <person name="Scheliga J.S."/>
            <person name="Toyama K."/>
            <person name="Morisaki H."/>
            <person name="Sonmez F.M."/>
            <person name="Celep F."/>
            <person name="Oraby A."/>
            <person name="Zaki M.S."/>
            <person name="Al-Baradie R."/>
            <person name="Faqeih E.A."/>
            <person name="Saleh M.A."/>
            <person name="Spencer E."/>
            <person name="Rosti R.O."/>
            <person name="Scott E."/>
            <person name="Nickerson E."/>
            <person name="Gabriel S."/>
            <person name="Morisaki T."/>
            <person name="Holmes E.W."/>
            <person name="Gleeson J.G."/>
        </authorList>
    </citation>
    <scope>FUNCTION</scope>
    <scope>TISSUE SPECIFICITY</scope>
    <scope>VARIANTS PCH9 HIS-620; ASP-724 AND TYR-739</scope>
    <scope>CATALYTIC ACTIVITY</scope>
</reference>
<reference key="16">
    <citation type="journal article" date="2013" name="J. Proteome Res.">
        <title>Toward a comprehensive characterization of a human cancer cell phosphoproteome.</title>
        <authorList>
            <person name="Zhou H."/>
            <person name="Di Palma S."/>
            <person name="Preisinger C."/>
            <person name="Peng M."/>
            <person name="Polat A.N."/>
            <person name="Heck A.J."/>
            <person name="Mohammed S."/>
        </authorList>
    </citation>
    <scope>PHOSPHORYLATION [LARGE SCALE ANALYSIS] AT SER-46; SER-64; SER-80; SER-114; SER-136 AND SER-138</scope>
    <scope>IDENTIFICATION BY MASS SPECTROMETRY [LARGE SCALE ANALYSIS]</scope>
    <source>
        <tissue>Cervix carcinoma</tissue>
        <tissue>Erythroleukemia</tissue>
    </source>
</reference>
<reference key="17">
    <citation type="journal article" date="2014" name="J. Proteomics">
        <title>An enzyme assisted RP-RPLC approach for in-depth analysis of human liver phosphoproteome.</title>
        <authorList>
            <person name="Bian Y."/>
            <person name="Song C."/>
            <person name="Cheng K."/>
            <person name="Dong M."/>
            <person name="Wang F."/>
            <person name="Huang J."/>
            <person name="Sun D."/>
            <person name="Wang L."/>
            <person name="Ye M."/>
            <person name="Zou H."/>
        </authorList>
    </citation>
    <scope>PHOSPHORYLATION [LARGE SCALE ANALYSIS] AT SER-46; SER-114 AND SER-136</scope>
    <scope>IDENTIFICATION BY MASS SPECTROMETRY [LARGE SCALE ANALYSIS]</scope>
    <source>
        <tissue>Liver</tissue>
    </source>
</reference>
<reference key="18">
    <citation type="journal article" date="2014" name="Science">
        <title>Exome sequencing links corticospinal motor neuron disease to common neurodegenerative disorders.</title>
        <authorList>
            <person name="Novarino G."/>
            <person name="Fenstermaker A.G."/>
            <person name="Zaki M.S."/>
            <person name="Hofree M."/>
            <person name="Silhavy J.L."/>
            <person name="Heiberg A.D."/>
            <person name="Abdellateef M."/>
            <person name="Rosti B."/>
            <person name="Scott E."/>
            <person name="Mansour L."/>
            <person name="Masri A."/>
            <person name="Kayserili H."/>
            <person name="Al-Aama J.Y."/>
            <person name="Abdel-Salam G.M."/>
            <person name="Karminejad A."/>
            <person name="Kara M."/>
            <person name="Kara B."/>
            <person name="Bozorgmehri B."/>
            <person name="Ben-Omran T."/>
            <person name="Mojahedi F."/>
            <person name="Mahmoud I.G."/>
            <person name="Bouslam N."/>
            <person name="Bouhouche A."/>
            <person name="Benomar A."/>
            <person name="Hanein S."/>
            <person name="Raymond L."/>
            <person name="Forlani S."/>
            <person name="Mascaro M."/>
            <person name="Selim L."/>
            <person name="Shehata N."/>
            <person name="Al-Allawi N."/>
            <person name="Bindu P.S."/>
            <person name="Azam M."/>
            <person name="Gunel M."/>
            <person name="Caglayan A."/>
            <person name="Bilguvar K."/>
            <person name="Tolun A."/>
            <person name="Issa M.Y."/>
            <person name="Schroth J."/>
            <person name="Spencer E.G."/>
            <person name="Rosti R.O."/>
            <person name="Akizu N."/>
            <person name="Vaux K.K."/>
            <person name="Johansen A."/>
            <person name="Koh A.A."/>
            <person name="Megahed H."/>
            <person name="Durr A."/>
            <person name="Brice A."/>
            <person name="Stevanin G."/>
            <person name="Gabriel S.B."/>
            <person name="Ideker T."/>
            <person name="Gleeson J.G."/>
        </authorList>
    </citation>
    <scope>INVOLVEMENT IN SPG63</scope>
</reference>
<name>AMPD2_HUMAN</name>
<evidence type="ECO:0000250" key="1"/>
<evidence type="ECO:0000250" key="2">
    <source>
        <dbReference type="UniProtKB" id="Q9DBT5"/>
    </source>
</evidence>
<evidence type="ECO:0000255" key="3">
    <source>
        <dbReference type="PROSITE-ProRule" id="PRU10104"/>
    </source>
</evidence>
<evidence type="ECO:0000256" key="4">
    <source>
        <dbReference type="SAM" id="MobiDB-lite"/>
    </source>
</evidence>
<evidence type="ECO:0000269" key="5">
    <source>
    </source>
</evidence>
<evidence type="ECO:0000269" key="6">
    <source>
    </source>
</evidence>
<evidence type="ECO:0000269" key="7">
    <source>
    </source>
</evidence>
<evidence type="ECO:0000303" key="8">
    <source>
    </source>
</evidence>
<evidence type="ECO:0000303" key="9">
    <source>
    </source>
</evidence>
<evidence type="ECO:0000305" key="10"/>
<evidence type="ECO:0000312" key="11">
    <source>
        <dbReference type="HGNC" id="HGNC:469"/>
    </source>
</evidence>
<evidence type="ECO:0007744" key="12">
    <source>
    </source>
</evidence>
<evidence type="ECO:0007744" key="13">
    <source>
    </source>
</evidence>
<evidence type="ECO:0007744" key="14">
    <source>
    </source>
</evidence>
<evidence type="ECO:0007744" key="15">
    <source>
    </source>
</evidence>
<evidence type="ECO:0007744" key="16">
    <source>
    </source>
</evidence>
<evidence type="ECO:0007744" key="17">
    <source>
    </source>
</evidence>
<evidence type="ECO:0007744" key="18">
    <source>
    </source>
</evidence>
<evidence type="ECO:0007829" key="19">
    <source>
        <dbReference type="PDB" id="8HU6"/>
    </source>
</evidence>
<evidence type="ECO:0007829" key="20">
    <source>
        <dbReference type="PDB" id="8HUB"/>
    </source>
</evidence>
<gene>
    <name evidence="11" type="primary">AMPD2</name>
</gene>
<sequence>MASYPSGSGKPKAKYPFKKRASLQASTAAPEARGGLGAPPLQSARSLPGPAPCLKHFPLDLRTSMDGKCKEIAEELFTRSLAESELRSAPYEFPEESPIEQLEERRQRLERQISQDVKLEPDILLRAKQDFLKTDSDSDLQLYKEQGEGQGDRSLRERDVLEREFQRVTISGEEKCGVPFTDLLDAAKSVVRALFIREKYMALSLQSFCPTTRRYLQQLAEKPLETRTYEQGPDTPVSADAPVHPPALEQHPYEHCEPSTMPGDLGLGLRMVRGVVHVYTRREPDEHCSEVELPYPDLQEFVADVNVLMALIINGPIKSFCYRRLQYLSSKFQMHVLLNEMKELAAQKKVPHRDFYNIRKVDTHIHASSCMNQKHLLRFIKRAMKRHLEEIVHVEQGREQTLREVFESMNLTAYDLSVDTLDVHADRNTFHRFDKFNAKYNPIGESVLREIFIKTDNRVSGKYFAHIIKEVMSDLEESKYQNAELRLSIYGRSRDEWDKLARWAVMHRVHSPNVRWLVQVPRLFDVYRTKGQLANFQEMLENIFLPLFEATVHPASHPELHLFLEHVDGFDSVDDESKPENHVFNLESPLPEAWVEEDNPPYAYYLYYTFANMAMLNHLRRQRGFHTFVLRPHCGEAGPIHHLVSAFMLAENISHGLLLRKAPVLQYLYYLAQIGIAMSPLSNNSLFLSYHRNPLPEYLSRGLMVSLSTDDPLQFHFTKEPLMEEYSIATQVWKLSSCDMCELARNSVLMSGFSHKVKSHWLGPNYTKEGPEGNDIRRTNVPDIRVGYRYETLCQELALITQAVQSEMLETIPEEAGITMSPGPQ</sequence>
<organism>
    <name type="scientific">Homo sapiens</name>
    <name type="common">Human</name>
    <dbReference type="NCBI Taxonomy" id="9606"/>
    <lineage>
        <taxon>Eukaryota</taxon>
        <taxon>Metazoa</taxon>
        <taxon>Chordata</taxon>
        <taxon>Craniata</taxon>
        <taxon>Vertebrata</taxon>
        <taxon>Euteleostomi</taxon>
        <taxon>Mammalia</taxon>
        <taxon>Eutheria</taxon>
        <taxon>Euarchontoglires</taxon>
        <taxon>Primates</taxon>
        <taxon>Haplorrhini</taxon>
        <taxon>Catarrhini</taxon>
        <taxon>Hominidae</taxon>
        <taxon>Homo</taxon>
    </lineage>
</organism>
<comment type="function">
    <text evidence="6">AMP deaminase plays a critical role in energy metabolism. Catalyzes the deamination of AMP to IMP and plays an important role in the purine nucleotide cycle.</text>
</comment>
<comment type="catalytic activity">
    <reaction evidence="6">
        <text>AMP + H2O + H(+) = IMP + NH4(+)</text>
        <dbReference type="Rhea" id="RHEA:14777"/>
        <dbReference type="ChEBI" id="CHEBI:15377"/>
        <dbReference type="ChEBI" id="CHEBI:15378"/>
        <dbReference type="ChEBI" id="CHEBI:28938"/>
        <dbReference type="ChEBI" id="CHEBI:58053"/>
        <dbReference type="ChEBI" id="CHEBI:456215"/>
        <dbReference type="EC" id="3.5.4.6"/>
    </reaction>
</comment>
<comment type="cofactor">
    <cofactor evidence="1">
        <name>Zn(2+)</name>
        <dbReference type="ChEBI" id="CHEBI:29105"/>
    </cofactor>
    <text evidence="1">Binds 1 zinc ion per subunit.</text>
</comment>
<comment type="pathway">
    <text evidence="6">Purine metabolism; IMP biosynthesis via salvage pathway; IMP from AMP: step 1/1.</text>
</comment>
<comment type="subunit">
    <text>Homotetramer.</text>
</comment>
<comment type="interaction">
    <interactant intactId="EBI-8796759">
        <id>Q01433</id>
    </interactant>
    <interactant intactId="EBI-748961">
        <id>O95273</id>
        <label>CCNDBP1</label>
    </interactant>
    <organismsDiffer>false</organismsDiffer>
    <experiments>4</experiments>
</comment>
<comment type="interaction">
    <interactant intactId="EBI-8796759">
        <id>Q01433</id>
    </interactant>
    <interactant intactId="EBI-723624">
        <id>Q9BW71</id>
        <label>HIRIP3</label>
    </interactant>
    <organismsDiffer>false</organismsDiffer>
    <experiments>4</experiments>
</comment>
<comment type="interaction">
    <interactant intactId="EBI-8796759">
        <id>Q01433</id>
    </interactant>
    <interactant intactId="EBI-710997">
        <id>P54274</id>
        <label>TERF1</label>
    </interactant>
    <organismsDiffer>false</organismsDiffer>
    <experiments>2</experiments>
</comment>
<comment type="interaction">
    <interactant intactId="EBI-11957578">
        <id>Q01433-2</id>
    </interactant>
    <interactant intactId="EBI-2959675">
        <id>P23109</id>
        <label>AMPD1</label>
    </interactant>
    <organismsDiffer>false</organismsDiffer>
    <experiments>3</experiments>
</comment>
<comment type="interaction">
    <interactant intactId="EBI-11957578">
        <id>Q01433-2</id>
    </interactant>
    <interactant intactId="EBI-11957578">
        <id>Q01433-2</id>
        <label>AMPD2</label>
    </interactant>
    <organismsDiffer>false</organismsDiffer>
    <experiments>3</experiments>
</comment>
<comment type="interaction">
    <interactant intactId="EBI-11957578">
        <id>Q01433-2</id>
    </interactant>
    <interactant intactId="EBI-741158">
        <id>Q96HA8</id>
        <label>NTAQ1</label>
    </interactant>
    <organismsDiffer>false</organismsDiffer>
    <experiments>3</experiments>
</comment>
<comment type="alternative products">
    <event type="alternative splicing"/>
    <isoform>
        <id>Q01433-1</id>
        <name>Ex1B-2-3</name>
        <sequence type="displayed"/>
    </isoform>
    <isoform>
        <id>Q01433-2</id>
        <name>Ex1A-2-3</name>
        <sequence type="described" ref="VSP_001271 VSP_001272"/>
    </isoform>
    <isoform>
        <id>Q01433-4</id>
        <name>Ex1B-3</name>
        <sequence type="described" ref="VSP_001273"/>
    </isoform>
    <isoform>
        <id>Q01433-5</id>
        <name>5</name>
        <sequence type="described" ref="VSP_045975"/>
    </isoform>
</comment>
<comment type="tissue specificity">
    <text evidence="6">Highly expressed in cerebellum.</text>
</comment>
<comment type="disease" evidence="6">
    <disease id="DI-04088">
        <name>Pontocerebellar hypoplasia 9</name>
        <acronym>PCH9</acronym>
        <description>A form of pontocerebellar hypoplasia, a disorder characterized by structural defects of the pons and cerebellum, evident upon brain imaging. PCH9 features include severely delayed psychomotor development, progressive microcephaly, spasticity, seizures, and brain abnormalities, including brain atrophy, thin corpus callosum, and delayed myelination.</description>
        <dbReference type="MIM" id="615809"/>
    </disease>
    <text>The disease is caused by variants affecting the gene represented in this entry.</text>
</comment>
<comment type="disease" evidence="7">
    <disease id="DI-04057">
        <name>Spastic paraplegia 63, autosomal recessive</name>
        <acronym>SPG63</acronym>
        <description>A form of spastic paraplegia, a neurodegenerative disorder characterized by a slow, gradual, progressive weakness and spasticity of the lower limbs. Rate of progression and the severity of symptoms are quite variable. Initial symptoms may include difficulty with balance, weakness and stiffness in the legs, muscle spasms, and dragging the toes when walking. In some forms of the disorder, bladder symptoms (such as incontinence) may appear, or the weakness and stiffness may spread to other parts of the body.</description>
        <dbReference type="MIM" id="615686"/>
    </disease>
    <text>The disease is caused by variants affecting the gene represented in this entry.</text>
</comment>
<comment type="similarity">
    <text evidence="10">Belongs to the metallo-dependent hydrolases superfamily. Adenosine and AMP deaminases family.</text>
</comment>
<comment type="sequence caution" evidence="10">
    <conflict type="miscellaneous discrepancy">
        <sequence resource="EMBL-CDS" id="AAA11725"/>
    </conflict>
    <text>Intron retention.</text>
</comment>
<comment type="sequence caution" evidence="10">
    <conflict type="miscellaneous discrepancy">
        <sequence resource="EMBL-CDS" id="AAA62127"/>
    </conflict>
    <text>Intron retention.</text>
</comment>
<comment type="sequence caution" evidence="10">
    <conflict type="erroneous initiation">
        <sequence resource="EMBL-CDS" id="AAC50307"/>
    </conflict>
    <text>Extended N-terminus.</text>
</comment>
<comment type="sequence caution" evidence="10">
    <conflict type="erroneous initiation">
        <sequence resource="EMBL-CDS" id="AAD56302"/>
    </conflict>
    <text>Extended N-terminus.</text>
</comment>
<comment type="sequence caution" evidence="10">
    <conflict type="erroneous gene model prediction">
        <sequence resource="EMBL-CDS" id="EAW56396"/>
    </conflict>
</comment>
<accession>Q01433</accession>
<accession>A0A5F9UK94</accession>
<accession>B4DK50</accession>
<accession>B4DZI5</accession>
<accession>E9PNG0</accession>
<accession>Q14856</accession>
<accession>Q14857</accession>
<accession>Q16686</accession>
<accession>Q16687</accession>
<accession>Q16688</accession>
<accession>Q16729</accession>
<accession>Q5T693</accession>
<accession>Q5T695</accession>
<accession>Q96IA1</accession>
<accession>Q9UDX8</accession>
<accession>Q9UDX9</accession>
<accession>Q9UMU4</accession>
<keyword id="KW-0002">3D-structure</keyword>
<keyword id="KW-0025">Alternative splicing</keyword>
<keyword id="KW-0225">Disease variant</keyword>
<keyword id="KW-0890">Hereditary spastic paraplegia</keyword>
<keyword id="KW-0378">Hydrolase</keyword>
<keyword id="KW-0479">Metal-binding</keyword>
<keyword id="KW-0488">Methylation</keyword>
<keyword id="KW-0523">Neurodegeneration</keyword>
<keyword id="KW-0546">Nucleotide metabolism</keyword>
<keyword id="KW-0597">Phosphoprotein</keyword>
<keyword id="KW-1267">Proteomics identification</keyword>
<keyword id="KW-1185">Reference proteome</keyword>
<keyword id="KW-0862">Zinc</keyword>
<dbReference type="EC" id="3.5.4.6" evidence="6"/>
<dbReference type="EMBL" id="M91029">
    <property type="protein sequence ID" value="AAA62126.1"/>
    <property type="molecule type" value="Genomic_RNA"/>
</dbReference>
<dbReference type="EMBL" id="M91029">
    <property type="protein sequence ID" value="AAA62127.1"/>
    <property type="status" value="ALT_SEQ"/>
    <property type="molecule type" value="Genomic_RNA"/>
</dbReference>
<dbReference type="EMBL" id="S47833">
    <property type="protein sequence ID" value="AAA11725.1"/>
    <property type="status" value="ALT_SEQ"/>
    <property type="molecule type" value="mRNA"/>
</dbReference>
<dbReference type="EMBL" id="U16267">
    <property type="protein sequence ID" value="AAC50306.1"/>
    <property type="molecule type" value="mRNA"/>
</dbReference>
<dbReference type="EMBL" id="U16268">
    <property type="protein sequence ID" value="AAC50307.1"/>
    <property type="status" value="ALT_INIT"/>
    <property type="molecule type" value="mRNA"/>
</dbReference>
<dbReference type="EMBL" id="U16269">
    <property type="protein sequence ID" value="AAB06511.1"/>
    <property type="molecule type" value="Genomic_RNA"/>
</dbReference>
<dbReference type="EMBL" id="U16270">
    <property type="protein sequence ID" value="AAC50308.1"/>
    <property type="molecule type" value="mRNA"/>
</dbReference>
<dbReference type="EMBL" id="U16272">
    <property type="protein sequence ID" value="AAC50309.2"/>
    <property type="molecule type" value="Genomic_DNA"/>
</dbReference>
<dbReference type="EMBL" id="U16271">
    <property type="protein sequence ID" value="AAC50309.2"/>
    <property type="status" value="JOINED"/>
    <property type="molecule type" value="Genomic_DNA"/>
</dbReference>
<dbReference type="EMBL" id="U16272">
    <property type="protein sequence ID" value="AAD56302.1"/>
    <property type="status" value="ALT_INIT"/>
    <property type="molecule type" value="Genomic_DNA"/>
</dbReference>
<dbReference type="EMBL" id="U16271">
    <property type="protein sequence ID" value="AAD56302.1"/>
    <property type="status" value="JOINED"/>
    <property type="molecule type" value="Genomic_DNA"/>
</dbReference>
<dbReference type="EMBL" id="U16272">
    <property type="protein sequence ID" value="AAD56303.1"/>
    <property type="molecule type" value="Genomic_DNA"/>
</dbReference>
<dbReference type="EMBL" id="U16271">
    <property type="protein sequence ID" value="AAD56303.1"/>
    <property type="status" value="JOINED"/>
    <property type="molecule type" value="Genomic_DNA"/>
</dbReference>
<dbReference type="EMBL" id="AK296394">
    <property type="protein sequence ID" value="BAG59062.1"/>
    <property type="molecule type" value="mRNA"/>
</dbReference>
<dbReference type="EMBL" id="AK302939">
    <property type="protein sequence ID" value="BAG64097.1"/>
    <property type="molecule type" value="mRNA"/>
</dbReference>
<dbReference type="EMBL" id="AL355310">
    <property type="status" value="NOT_ANNOTATED_CDS"/>
    <property type="molecule type" value="Genomic_DNA"/>
</dbReference>
<dbReference type="EMBL" id="CH471122">
    <property type="protein sequence ID" value="EAW56396.1"/>
    <property type="status" value="ALT_SEQ"/>
    <property type="molecule type" value="Genomic_DNA"/>
</dbReference>
<dbReference type="EMBL" id="CH471122">
    <property type="protein sequence ID" value="EAW56399.1"/>
    <property type="molecule type" value="Genomic_DNA"/>
</dbReference>
<dbReference type="EMBL" id="CH471122">
    <property type="protein sequence ID" value="EAW56401.1"/>
    <property type="molecule type" value="Genomic_DNA"/>
</dbReference>
<dbReference type="EMBL" id="BC007711">
    <property type="protein sequence ID" value="AAH07711.1"/>
    <property type="molecule type" value="mRNA"/>
</dbReference>
<dbReference type="EMBL" id="BC075844">
    <property type="protein sequence ID" value="AAH75844.1"/>
    <property type="molecule type" value="mRNA"/>
</dbReference>
<dbReference type="CCDS" id="CCDS58016.1">
    <molecule id="Q01433-5"/>
</dbReference>
<dbReference type="CCDS" id="CCDS804.1">
    <molecule id="Q01433-2"/>
</dbReference>
<dbReference type="CCDS" id="CCDS805.2">
    <molecule id="Q01433-1"/>
</dbReference>
<dbReference type="PIR" id="A44313">
    <property type="entry name" value="A44313"/>
</dbReference>
<dbReference type="PIR" id="S59994">
    <property type="entry name" value="S59994"/>
</dbReference>
<dbReference type="PIR" id="S59995">
    <property type="entry name" value="S59995"/>
</dbReference>
<dbReference type="PIR" id="S59998">
    <property type="entry name" value="S59998"/>
</dbReference>
<dbReference type="PIR" id="S59999">
    <property type="entry name" value="S59999"/>
</dbReference>
<dbReference type="PIR" id="S60000">
    <property type="entry name" value="S60000"/>
</dbReference>
<dbReference type="RefSeq" id="NP_001244289.1">
    <property type="nucleotide sequence ID" value="NM_001257360.1"/>
</dbReference>
<dbReference type="RefSeq" id="NP_001244290.1">
    <molecule id="Q01433-5"/>
    <property type="nucleotide sequence ID" value="NM_001257361.2"/>
</dbReference>
<dbReference type="RefSeq" id="NP_001295099.1">
    <molecule id="Q01433-4"/>
    <property type="nucleotide sequence ID" value="NM_001308170.1"/>
</dbReference>
<dbReference type="RefSeq" id="NP_001355738.1">
    <molecule id="Q01433-1"/>
    <property type="nucleotide sequence ID" value="NM_001368809.2"/>
</dbReference>
<dbReference type="RefSeq" id="NP_004028.3">
    <molecule id="Q01433-1"/>
    <property type="nucleotide sequence ID" value="NM_004037.7"/>
</dbReference>
<dbReference type="RefSeq" id="NP_631895.1">
    <molecule id="Q01433-2"/>
    <property type="nucleotide sequence ID" value="NM_139156.4"/>
</dbReference>
<dbReference type="RefSeq" id="NP_981949.1">
    <property type="nucleotide sequence ID" value="NM_203404.1"/>
</dbReference>
<dbReference type="PDB" id="4NO3">
    <property type="method" value="X-ray"/>
    <property type="resolution" value="1.70 A"/>
    <property type="chains" value="C=111-119"/>
</dbReference>
<dbReference type="PDB" id="4NO5">
    <property type="method" value="X-ray"/>
    <property type="resolution" value="2.10 A"/>
    <property type="chains" value="C=111-119"/>
</dbReference>
<dbReference type="PDB" id="8HU6">
    <property type="method" value="X-ray"/>
    <property type="resolution" value="2.33 A"/>
    <property type="chains" value="A/B/C/D=157-825"/>
</dbReference>
<dbReference type="PDB" id="8HUB">
    <property type="method" value="X-ray"/>
    <property type="resolution" value="3.25 A"/>
    <property type="chains" value="A/B/C/D=157-825"/>
</dbReference>
<dbReference type="PDBsum" id="4NO3"/>
<dbReference type="PDBsum" id="4NO5"/>
<dbReference type="PDBsum" id="8HU6"/>
<dbReference type="PDBsum" id="8HUB"/>
<dbReference type="SMR" id="Q01433"/>
<dbReference type="BioGRID" id="106768">
    <property type="interactions" value="132"/>
</dbReference>
<dbReference type="FunCoup" id="Q01433">
    <property type="interactions" value="1803"/>
</dbReference>
<dbReference type="IntAct" id="Q01433">
    <property type="interactions" value="55"/>
</dbReference>
<dbReference type="MINT" id="Q01433"/>
<dbReference type="STRING" id="9606.ENSP00000499465"/>
<dbReference type="BindingDB" id="Q01433"/>
<dbReference type="ChEMBL" id="CHEMBL2997"/>
<dbReference type="GlyCosmos" id="Q01433">
    <property type="glycosylation" value="1 site, 2 glycans"/>
</dbReference>
<dbReference type="iPTMnet" id="Q01433"/>
<dbReference type="MetOSite" id="Q01433"/>
<dbReference type="PhosphoSitePlus" id="Q01433"/>
<dbReference type="SwissPalm" id="Q01433"/>
<dbReference type="BioMuta" id="AMPD2"/>
<dbReference type="DMDM" id="12644375"/>
<dbReference type="jPOST" id="Q01433"/>
<dbReference type="MassIVE" id="Q01433"/>
<dbReference type="PaxDb" id="9606-ENSP00000256578"/>
<dbReference type="PeptideAtlas" id="Q01433"/>
<dbReference type="ProteomicsDB" id="22402"/>
<dbReference type="ProteomicsDB" id="57950">
    <molecule id="Q01433-1"/>
</dbReference>
<dbReference type="ProteomicsDB" id="57951">
    <molecule id="Q01433-2"/>
</dbReference>
<dbReference type="ProteomicsDB" id="57953">
    <molecule id="Q01433-4"/>
</dbReference>
<dbReference type="Pumba" id="Q01433"/>
<dbReference type="Antibodypedia" id="33766">
    <property type="antibodies" value="224 antibodies from 31 providers"/>
</dbReference>
<dbReference type="DNASU" id="271"/>
<dbReference type="Ensembl" id="ENST00000256578.8">
    <molecule id="Q01433-1"/>
    <property type="protein sequence ID" value="ENSP00000256578.4"/>
    <property type="gene ID" value="ENSG00000116337.20"/>
</dbReference>
<dbReference type="Ensembl" id="ENST00000342115.8">
    <molecule id="Q01433-2"/>
    <property type="protein sequence ID" value="ENSP00000345498.4"/>
    <property type="gene ID" value="ENSG00000116337.20"/>
</dbReference>
<dbReference type="Ensembl" id="ENST00000528454.5">
    <molecule id="Q01433-5"/>
    <property type="protein sequence ID" value="ENSP00000437164.1"/>
    <property type="gene ID" value="ENSG00000116337.20"/>
</dbReference>
<dbReference type="Ensembl" id="ENST00000528667.7">
    <molecule id="Q01433-1"/>
    <property type="protein sequence ID" value="ENSP00000436541.2"/>
    <property type="gene ID" value="ENSG00000116337.20"/>
</dbReference>
<dbReference type="Ensembl" id="ENST00000531203.6">
    <molecule id="Q01433-5"/>
    <property type="protein sequence ID" value="ENSP00000431975.2"/>
    <property type="gene ID" value="ENSG00000116337.20"/>
</dbReference>
<dbReference type="Ensembl" id="ENST00000531734.6">
    <molecule id="Q01433-2"/>
    <property type="protein sequence ID" value="ENSP00000433739.2"/>
    <property type="gene ID" value="ENSG00000116337.20"/>
</dbReference>
<dbReference type="GeneID" id="271"/>
<dbReference type="KEGG" id="hsa:271"/>
<dbReference type="MANE-Select" id="ENST00000528667.7">
    <property type="protein sequence ID" value="ENSP00000436541.2"/>
    <property type="RefSeq nucleotide sequence ID" value="NM_001368809.2"/>
    <property type="RefSeq protein sequence ID" value="NP_001355738.1"/>
</dbReference>
<dbReference type="UCSC" id="uc001dyb.3">
    <molecule id="Q01433-1"/>
    <property type="organism name" value="human"/>
</dbReference>
<dbReference type="AGR" id="HGNC:469"/>
<dbReference type="CTD" id="271"/>
<dbReference type="DisGeNET" id="271"/>
<dbReference type="GeneCards" id="AMPD2"/>
<dbReference type="HGNC" id="HGNC:469">
    <property type="gene designation" value="AMPD2"/>
</dbReference>
<dbReference type="HPA" id="ENSG00000116337">
    <property type="expression patterns" value="Tissue enhanced (choroid)"/>
</dbReference>
<dbReference type="MalaCards" id="AMPD2"/>
<dbReference type="MIM" id="102771">
    <property type="type" value="gene"/>
</dbReference>
<dbReference type="MIM" id="615686">
    <property type="type" value="phenotype"/>
</dbReference>
<dbReference type="MIM" id="615809">
    <property type="type" value="phenotype"/>
</dbReference>
<dbReference type="neXtProt" id="NX_Q01433"/>
<dbReference type="OpenTargets" id="ENSG00000116337"/>
<dbReference type="Orphanet" id="401805">
    <property type="disease" value="Autosomal recessive spastic paraplegia type 63"/>
</dbReference>
<dbReference type="Orphanet" id="369920">
    <property type="disease" value="Pontocerebellar hypoplasia type 9"/>
</dbReference>
<dbReference type="PharmGKB" id="PA24777"/>
<dbReference type="VEuPathDB" id="HostDB:ENSG00000116337"/>
<dbReference type="eggNOG" id="KOG1096">
    <property type="taxonomic scope" value="Eukaryota"/>
</dbReference>
<dbReference type="GeneTree" id="ENSGT00950000183011"/>
<dbReference type="HOGENOM" id="CLU_003782_4_0_1"/>
<dbReference type="InParanoid" id="Q01433"/>
<dbReference type="OMA" id="FHRKFPY"/>
<dbReference type="OrthoDB" id="1723809at2759"/>
<dbReference type="PAN-GO" id="Q01433">
    <property type="GO annotations" value="4 GO annotations based on evolutionary models"/>
</dbReference>
<dbReference type="PhylomeDB" id="Q01433"/>
<dbReference type="TreeFam" id="TF300439"/>
<dbReference type="BioCyc" id="MetaCyc:HS04008-MONOMER"/>
<dbReference type="BRENDA" id="3.5.4.6">
    <property type="organism ID" value="2681"/>
</dbReference>
<dbReference type="PathwayCommons" id="Q01433"/>
<dbReference type="Reactome" id="R-HSA-74217">
    <property type="pathway name" value="Purine salvage"/>
</dbReference>
<dbReference type="SABIO-RK" id="Q01433"/>
<dbReference type="SignaLink" id="Q01433"/>
<dbReference type="UniPathway" id="UPA00591">
    <property type="reaction ID" value="UER00663"/>
</dbReference>
<dbReference type="BioGRID-ORCS" id="271">
    <property type="hits" value="24 hits in 1161 CRISPR screens"/>
</dbReference>
<dbReference type="CD-CODE" id="FB4E32DD">
    <property type="entry name" value="Presynaptic clusters and postsynaptic densities"/>
</dbReference>
<dbReference type="ChiTaRS" id="AMPD2">
    <property type="organism name" value="human"/>
</dbReference>
<dbReference type="EvolutionaryTrace" id="Q01433"/>
<dbReference type="GeneWiki" id="AMPD2"/>
<dbReference type="GenomeRNAi" id="271"/>
<dbReference type="Pharos" id="Q01433">
    <property type="development level" value="Tchem"/>
</dbReference>
<dbReference type="PRO" id="PR:Q01433"/>
<dbReference type="Proteomes" id="UP000005640">
    <property type="component" value="Chromosome 1"/>
</dbReference>
<dbReference type="RNAct" id="Q01433">
    <property type="molecule type" value="protein"/>
</dbReference>
<dbReference type="Bgee" id="ENSG00000116337">
    <property type="expression patterns" value="Expressed in adenohypophysis and 178 other cell types or tissues"/>
</dbReference>
<dbReference type="ExpressionAtlas" id="Q01433">
    <property type="expression patterns" value="baseline and differential"/>
</dbReference>
<dbReference type="GO" id="GO:0005829">
    <property type="term" value="C:cytosol"/>
    <property type="evidence" value="ECO:0000314"/>
    <property type="project" value="HPA"/>
</dbReference>
<dbReference type="GO" id="GO:0003876">
    <property type="term" value="F:AMP deaminase activity"/>
    <property type="evidence" value="ECO:0000316"/>
    <property type="project" value="MGI"/>
</dbReference>
<dbReference type="GO" id="GO:0042802">
    <property type="term" value="F:identical protein binding"/>
    <property type="evidence" value="ECO:0000353"/>
    <property type="project" value="IntAct"/>
</dbReference>
<dbReference type="GO" id="GO:0046872">
    <property type="term" value="F:metal ion binding"/>
    <property type="evidence" value="ECO:0007669"/>
    <property type="project" value="UniProtKB-KW"/>
</dbReference>
<dbReference type="GO" id="GO:0046033">
    <property type="term" value="P:AMP metabolic process"/>
    <property type="evidence" value="ECO:0000318"/>
    <property type="project" value="GO_Central"/>
</dbReference>
<dbReference type="GO" id="GO:0046034">
    <property type="term" value="P:ATP metabolic process"/>
    <property type="evidence" value="ECO:0007669"/>
    <property type="project" value="Ensembl"/>
</dbReference>
<dbReference type="GO" id="GO:0042632">
    <property type="term" value="P:cholesterol homeostasis"/>
    <property type="evidence" value="ECO:0007669"/>
    <property type="project" value="Ensembl"/>
</dbReference>
<dbReference type="GO" id="GO:0052652">
    <property type="term" value="P:cyclic purine nucleotide metabolic process"/>
    <property type="evidence" value="ECO:0000315"/>
    <property type="project" value="UniProtKB"/>
</dbReference>
<dbReference type="GO" id="GO:0097009">
    <property type="term" value="P:energy homeostasis"/>
    <property type="evidence" value="ECO:0000316"/>
    <property type="project" value="MGI"/>
</dbReference>
<dbReference type="GO" id="GO:0046039">
    <property type="term" value="P:GTP metabolic process"/>
    <property type="evidence" value="ECO:0007669"/>
    <property type="project" value="Ensembl"/>
</dbReference>
<dbReference type="GO" id="GO:0006188">
    <property type="term" value="P:IMP biosynthetic process"/>
    <property type="evidence" value="ECO:0000316"/>
    <property type="project" value="MGI"/>
</dbReference>
<dbReference type="GO" id="GO:0032264">
    <property type="term" value="P:IMP salvage"/>
    <property type="evidence" value="ECO:0007669"/>
    <property type="project" value="UniProtKB-UniPathway"/>
</dbReference>
<dbReference type="GO" id="GO:0072015">
    <property type="term" value="P:podocyte development"/>
    <property type="evidence" value="ECO:0007669"/>
    <property type="project" value="Ensembl"/>
</dbReference>
<dbReference type="CDD" id="cd01319">
    <property type="entry name" value="AMPD"/>
    <property type="match status" value="1"/>
</dbReference>
<dbReference type="FunFam" id="4.10.800.20:FF:000001">
    <property type="entry name" value="AMP deaminase"/>
    <property type="match status" value="1"/>
</dbReference>
<dbReference type="FunFam" id="3.20.20.140:FF:000035">
    <property type="entry name" value="Probable amp deaminase"/>
    <property type="match status" value="1"/>
</dbReference>
<dbReference type="Gene3D" id="4.10.800.20">
    <property type="match status" value="1"/>
</dbReference>
<dbReference type="Gene3D" id="3.20.20.140">
    <property type="entry name" value="Metal-dependent hydrolases"/>
    <property type="match status" value="1"/>
</dbReference>
<dbReference type="InterPro" id="IPR006650">
    <property type="entry name" value="A/AMP_deam_AS"/>
</dbReference>
<dbReference type="InterPro" id="IPR006329">
    <property type="entry name" value="AMPD"/>
</dbReference>
<dbReference type="InterPro" id="IPR032466">
    <property type="entry name" value="Metal_Hydrolase"/>
</dbReference>
<dbReference type="NCBIfam" id="TIGR01429">
    <property type="entry name" value="AMP_deaminase"/>
    <property type="match status" value="1"/>
</dbReference>
<dbReference type="PANTHER" id="PTHR11359">
    <property type="entry name" value="AMP DEAMINASE"/>
    <property type="match status" value="1"/>
</dbReference>
<dbReference type="PANTHER" id="PTHR11359:SF3">
    <property type="entry name" value="AMP DEAMINASE 2"/>
    <property type="match status" value="1"/>
</dbReference>
<dbReference type="Pfam" id="PF19326">
    <property type="entry name" value="AMP_deaminase"/>
    <property type="match status" value="1"/>
</dbReference>
<dbReference type="PIRSF" id="PIRSF001251">
    <property type="entry name" value="AMP_deaminase_met"/>
    <property type="match status" value="1"/>
</dbReference>
<dbReference type="SUPFAM" id="SSF51556">
    <property type="entry name" value="Metallo-dependent hydrolases"/>
    <property type="match status" value="1"/>
</dbReference>
<dbReference type="PROSITE" id="PS00485">
    <property type="entry name" value="A_DEAMINASE"/>
    <property type="match status" value="1"/>
</dbReference>
<feature type="chain" id="PRO_0000194407" description="AMP deaminase 2">
    <location>
        <begin position="1"/>
        <end position="825"/>
    </location>
</feature>
<feature type="region of interest" description="Disordered" evidence="4">
    <location>
        <begin position="1"/>
        <end position="49"/>
    </location>
</feature>
<feature type="compositionally biased region" description="Basic residues" evidence="4">
    <location>
        <begin position="11"/>
        <end position="21"/>
    </location>
</feature>
<feature type="active site" description="Proton acceptor" evidence="3">
    <location>
        <position position="655"/>
    </location>
</feature>
<feature type="binding site" evidence="1">
    <location>
        <position position="364"/>
    </location>
    <ligand>
        <name>Zn(2+)</name>
        <dbReference type="ChEBI" id="CHEBI:29105"/>
        <note>catalytic</note>
    </ligand>
</feature>
<feature type="binding site" evidence="1">
    <location>
        <position position="366"/>
    </location>
    <ligand>
        <name>substrate</name>
    </ligand>
</feature>
<feature type="binding site" evidence="1">
    <location>
        <position position="366"/>
    </location>
    <ligand>
        <name>Zn(2+)</name>
        <dbReference type="ChEBI" id="CHEBI:29105"/>
        <note>catalytic</note>
    </ligand>
</feature>
<feature type="binding site" evidence="1">
    <location>
        <begin position="435"/>
        <end position="440"/>
    </location>
    <ligand>
        <name>substrate</name>
    </ligand>
</feature>
<feature type="binding site" evidence="1">
    <location>
        <position position="633"/>
    </location>
    <ligand>
        <name>Zn(2+)</name>
        <dbReference type="ChEBI" id="CHEBI:29105"/>
        <note>catalytic</note>
    </ligand>
</feature>
<feature type="binding site" evidence="1">
    <location>
        <position position="636"/>
    </location>
    <ligand>
        <name>substrate</name>
    </ligand>
</feature>
<feature type="binding site" evidence="1">
    <location>
        <position position="710"/>
    </location>
    <ligand>
        <name>Zn(2+)</name>
        <dbReference type="ChEBI" id="CHEBI:29105"/>
        <note>catalytic</note>
    </ligand>
</feature>
<feature type="binding site" evidence="1">
    <location>
        <begin position="711"/>
        <end position="714"/>
    </location>
    <ligand>
        <name>substrate</name>
    </ligand>
</feature>
<feature type="modified residue" description="Phosphoserine" evidence="14">
    <location>
        <position position="22"/>
    </location>
</feature>
<feature type="modified residue" description="Omega-N-methylarginine" evidence="2">
    <location>
        <position position="45"/>
    </location>
</feature>
<feature type="modified residue" description="Phosphoserine" evidence="17 18">
    <location>
        <position position="46"/>
    </location>
</feature>
<feature type="modified residue" description="Phosphoserine" evidence="13 17">
    <location>
        <position position="64"/>
    </location>
</feature>
<feature type="modified residue" description="Phosphoserine" evidence="17">
    <location>
        <position position="80"/>
    </location>
</feature>
<feature type="modified residue" description="Phosphotyrosine" evidence="2">
    <location>
        <position position="91"/>
    </location>
</feature>
<feature type="modified residue" description="Phosphoserine" evidence="13">
    <location>
        <position position="97"/>
    </location>
</feature>
<feature type="modified residue" description="Phosphoserine" evidence="12 15 17 18">
    <location>
        <position position="114"/>
    </location>
</feature>
<feature type="modified residue" description="Phosphothreonine" evidence="13">
    <location>
        <position position="134"/>
    </location>
</feature>
<feature type="modified residue" description="Phosphoserine" evidence="13 14 15 16 17 18">
    <location>
        <position position="136"/>
    </location>
</feature>
<feature type="modified residue" description="Phosphoserine" evidence="17">
    <location>
        <position position="138"/>
    </location>
</feature>
<feature type="splice variant" id="VSP_001273" description="In isoform Ex1B-3." evidence="8">
    <original>MASYPSGSGKPKAKYPFKKRASLQASTAAPEARGGLGAPPLQSARSLPGPAPCLKHFPLDLRTSMDGKCKEIAE</original>
    <variation>MWQSQAPAGAAQTPPLSPPWSQPWHPIHLALASPRPNIPLRSGPACRPPLQLQ</variation>
    <location>
        <begin position="1"/>
        <end position="74"/>
    </location>
</feature>
<feature type="splice variant" id="VSP_045975" description="In isoform 5." evidence="8">
    <location>
        <begin position="1"/>
        <end position="64"/>
    </location>
</feature>
<feature type="splice variant" id="VSP_001271" description="In isoform Ex1A-2-3." evidence="9">
    <location>
        <begin position="1"/>
        <end position="27"/>
    </location>
</feature>
<feature type="splice variant" id="VSP_001272" description="In isoform Ex1A-2-3." evidence="9">
    <original>AAP</original>
    <variation>MAS</variation>
    <location>
        <begin position="28"/>
        <end position="30"/>
    </location>
</feature>
<feature type="sequence variant" id="VAR_069105" description="In dbSNP:rs201254826." evidence="5">
    <original>I</original>
    <variation>V</variation>
    <location>
        <position position="468"/>
    </location>
</feature>
<feature type="sequence variant" id="VAR_071158" description="In PCH9; dbSNP:rs587777395." evidence="6">
    <original>R</original>
    <variation>H</variation>
    <location>
        <position position="620"/>
    </location>
</feature>
<feature type="sequence variant" id="VAR_071193" description="In PCH9; dbSNP:rs587777392." evidence="6">
    <original>E</original>
    <variation>D</variation>
    <location>
        <position position="724"/>
    </location>
</feature>
<feature type="sequence variant" id="VAR_071159" description="In PCH9; dbSNP:rs587777394." evidence="6">
    <original>D</original>
    <variation>Y</variation>
    <location>
        <position position="739"/>
    </location>
</feature>
<feature type="sequence conflict" description="In Ref. 1; AAA11725." evidence="10" ref="1">
    <original>R</original>
    <variation>G</variation>
    <location>
        <position position="153"/>
    </location>
</feature>
<feature type="sequence conflict" description="In Ref. 4; BAG59062." evidence="10" ref="4">
    <original>V</original>
    <variation>I</variation>
    <location>
        <position position="757"/>
    </location>
</feature>
<feature type="strand" evidence="19">
    <location>
        <begin position="167"/>
        <end position="173"/>
    </location>
</feature>
<feature type="helix" evidence="19">
    <location>
        <begin position="180"/>
        <end position="203"/>
    </location>
</feature>
<feature type="helix" evidence="19">
    <location>
        <begin position="210"/>
        <end position="217"/>
    </location>
</feature>
<feature type="turn" evidence="20">
    <location>
        <begin position="252"/>
        <end position="254"/>
    </location>
</feature>
<feature type="helix" evidence="19">
    <location>
        <begin position="258"/>
        <end position="260"/>
    </location>
</feature>
<feature type="strand" evidence="19">
    <location>
        <begin position="268"/>
        <end position="272"/>
    </location>
</feature>
<feature type="strand" evidence="19">
    <location>
        <begin position="275"/>
        <end position="280"/>
    </location>
</feature>
<feature type="helix" evidence="19">
    <location>
        <begin position="298"/>
        <end position="311"/>
    </location>
</feature>
<feature type="helix" evidence="19">
    <location>
        <begin position="315"/>
        <end position="349"/>
    </location>
</feature>
<feature type="strand" evidence="19">
    <location>
        <begin position="350"/>
        <end position="352"/>
    </location>
</feature>
<feature type="helix" evidence="19">
    <location>
        <begin position="355"/>
        <end position="357"/>
    </location>
</feature>
<feature type="strand" evidence="19">
    <location>
        <begin position="360"/>
        <end position="366"/>
    </location>
</feature>
<feature type="helix" evidence="19">
    <location>
        <begin position="367"/>
        <end position="369"/>
    </location>
</feature>
<feature type="helix" evidence="19">
    <location>
        <begin position="373"/>
        <end position="384"/>
    </location>
</feature>
<feature type="strand" evidence="19">
    <location>
        <begin position="391"/>
        <end position="397"/>
    </location>
</feature>
<feature type="strand" evidence="19">
    <location>
        <begin position="399"/>
        <end position="401"/>
    </location>
</feature>
<feature type="helix" evidence="19">
    <location>
        <begin position="402"/>
        <end position="408"/>
    </location>
</feature>
<feature type="turn" evidence="19">
    <location>
        <begin position="413"/>
        <end position="415"/>
    </location>
</feature>
<feature type="helix" evidence="19">
    <location>
        <begin position="418"/>
        <end position="421"/>
    </location>
</feature>
<feature type="helix" evidence="19">
    <location>
        <begin position="427"/>
        <end position="429"/>
    </location>
</feature>
<feature type="helix" evidence="19">
    <location>
        <begin position="433"/>
        <end position="438"/>
    </location>
</feature>
<feature type="helix" evidence="19">
    <location>
        <begin position="442"/>
        <end position="444"/>
    </location>
</feature>
<feature type="helix" evidence="19">
    <location>
        <begin position="446"/>
        <end position="452"/>
    </location>
</feature>
<feature type="strand" evidence="19">
    <location>
        <begin position="455"/>
        <end position="457"/>
    </location>
</feature>
<feature type="turn" evidence="19">
    <location>
        <begin position="458"/>
        <end position="461"/>
    </location>
</feature>
<feature type="helix" evidence="19">
    <location>
        <begin position="462"/>
        <end position="478"/>
    </location>
</feature>
<feature type="strand" evidence="19">
    <location>
        <begin position="479"/>
        <end position="488"/>
    </location>
</feature>
<feature type="strand" evidence="19">
    <location>
        <begin position="491"/>
        <end position="493"/>
    </location>
</feature>
<feature type="helix" evidence="19">
    <location>
        <begin position="496"/>
        <end position="507"/>
    </location>
</feature>
<feature type="strand" evidence="19">
    <location>
        <begin position="514"/>
        <end position="521"/>
    </location>
</feature>
<feature type="helix" evidence="19">
    <location>
        <begin position="524"/>
        <end position="529"/>
    </location>
</feature>
<feature type="helix" evidence="19">
    <location>
        <begin position="536"/>
        <end position="552"/>
    </location>
</feature>
<feature type="helix" evidence="19">
    <location>
        <begin position="554"/>
        <end position="556"/>
    </location>
</feature>
<feature type="helix" evidence="19">
    <location>
        <begin position="558"/>
        <end position="563"/>
    </location>
</feature>
<feature type="helix" evidence="19">
    <location>
        <begin position="564"/>
        <end position="566"/>
    </location>
</feature>
<feature type="strand" evidence="19">
    <location>
        <begin position="567"/>
        <end position="574"/>
    </location>
</feature>
<feature type="turn" evidence="19">
    <location>
        <begin position="591"/>
        <end position="593"/>
    </location>
</feature>
<feature type="strand" evidence="19">
    <location>
        <begin position="596"/>
        <end position="598"/>
    </location>
</feature>
<feature type="helix" evidence="19">
    <location>
        <begin position="602"/>
        <end position="623"/>
    </location>
</feature>
<feature type="strand" evidence="19">
    <location>
        <begin position="633"/>
        <end position="638"/>
    </location>
</feature>
<feature type="helix" evidence="19">
    <location>
        <begin position="642"/>
        <end position="649"/>
    </location>
</feature>
<feature type="strand" evidence="19">
    <location>
        <begin position="651"/>
        <end position="655"/>
    </location>
</feature>
<feature type="helix" evidence="19">
    <location>
        <begin position="657"/>
        <end position="661"/>
    </location>
</feature>
<feature type="helix" evidence="19">
    <location>
        <begin position="663"/>
        <end position="672"/>
    </location>
</feature>
<feature type="strand" evidence="19">
    <location>
        <begin position="675"/>
        <end position="678"/>
    </location>
</feature>
<feature type="helix" evidence="19">
    <location>
        <begin position="680"/>
        <end position="684"/>
    </location>
</feature>
<feature type="helix" evidence="19">
    <location>
        <begin position="690"/>
        <end position="692"/>
    </location>
</feature>
<feature type="helix" evidence="19">
    <location>
        <begin position="695"/>
        <end position="701"/>
    </location>
</feature>
<feature type="strand" evidence="19">
    <location>
        <begin position="705"/>
        <end position="707"/>
    </location>
</feature>
<feature type="helix" evidence="19">
    <location>
        <begin position="712"/>
        <end position="715"/>
    </location>
</feature>
<feature type="helix" evidence="19">
    <location>
        <begin position="721"/>
        <end position="733"/>
    </location>
</feature>
<feature type="helix" evidence="19">
    <location>
        <begin position="737"/>
        <end position="750"/>
    </location>
</feature>
<feature type="helix" evidence="19">
    <location>
        <begin position="755"/>
        <end position="762"/>
    </location>
</feature>
<feature type="turn" evidence="19">
    <location>
        <begin position="764"/>
        <end position="767"/>
    </location>
</feature>
<feature type="helix" evidence="19">
    <location>
        <begin position="770"/>
        <end position="773"/>
    </location>
</feature>
<feature type="helix" evidence="19">
    <location>
        <begin position="776"/>
        <end position="779"/>
    </location>
</feature>
<feature type="helix" evidence="19">
    <location>
        <begin position="783"/>
        <end position="808"/>
    </location>
</feature>